<reference key="1">
    <citation type="journal article" date="2001" name="J. Bacteriol.">
        <title>Genome of the bacterium Streptococcus pneumoniae strain R6.</title>
        <authorList>
            <person name="Hoskins J."/>
            <person name="Alborn W.E. Jr."/>
            <person name="Arnold J."/>
            <person name="Blaszczak L.C."/>
            <person name="Burgett S."/>
            <person name="DeHoff B.S."/>
            <person name="Estrem S.T."/>
            <person name="Fritz L."/>
            <person name="Fu D.-J."/>
            <person name="Fuller W."/>
            <person name="Geringer C."/>
            <person name="Gilmour R."/>
            <person name="Glass J.S."/>
            <person name="Khoja H."/>
            <person name="Kraft A.R."/>
            <person name="Lagace R.E."/>
            <person name="LeBlanc D.J."/>
            <person name="Lee L.N."/>
            <person name="Lefkowitz E.J."/>
            <person name="Lu J."/>
            <person name="Matsushima P."/>
            <person name="McAhren S.M."/>
            <person name="McHenney M."/>
            <person name="McLeaster K."/>
            <person name="Mundy C.W."/>
            <person name="Nicas T.I."/>
            <person name="Norris F.H."/>
            <person name="O'Gara M."/>
            <person name="Peery R.B."/>
            <person name="Robertson G.T."/>
            <person name="Rockey P."/>
            <person name="Sun P.-M."/>
            <person name="Winkler M.E."/>
            <person name="Yang Y."/>
            <person name="Young-Bellido M."/>
            <person name="Zhao G."/>
            <person name="Zook C.A."/>
            <person name="Baltz R.H."/>
            <person name="Jaskunas S.R."/>
            <person name="Rosteck P.R. Jr."/>
            <person name="Skatrud P.L."/>
            <person name="Glass J.I."/>
        </authorList>
    </citation>
    <scope>NUCLEOTIDE SEQUENCE [LARGE SCALE GENOMIC DNA]</scope>
    <source>
        <strain>ATCC BAA-255 / R6</strain>
    </source>
</reference>
<name>RS6_STRR6</name>
<accession>P66603</accession>
<accession>Q97PR1</accession>
<dbReference type="EMBL" id="AE007317">
    <property type="protein sequence ID" value="AAL00200.1"/>
    <property type="molecule type" value="Genomic_DNA"/>
</dbReference>
<dbReference type="PIR" id="C98046">
    <property type="entry name" value="C98046"/>
</dbReference>
<dbReference type="RefSeq" id="NP_358989.1">
    <property type="nucleotide sequence ID" value="NC_003098.1"/>
</dbReference>
<dbReference type="RefSeq" id="WP_001151785.1">
    <property type="nucleotide sequence ID" value="NC_003098.1"/>
</dbReference>
<dbReference type="SMR" id="P66603"/>
<dbReference type="STRING" id="171101.spr1396"/>
<dbReference type="GeneID" id="45653220"/>
<dbReference type="KEGG" id="spr:spr1396"/>
<dbReference type="PATRIC" id="fig|171101.6.peg.1511"/>
<dbReference type="eggNOG" id="COG0360">
    <property type="taxonomic scope" value="Bacteria"/>
</dbReference>
<dbReference type="HOGENOM" id="CLU_113441_5_3_9"/>
<dbReference type="PRO" id="PR:P66603"/>
<dbReference type="Proteomes" id="UP000000586">
    <property type="component" value="Chromosome"/>
</dbReference>
<dbReference type="GO" id="GO:0005737">
    <property type="term" value="C:cytoplasm"/>
    <property type="evidence" value="ECO:0007669"/>
    <property type="project" value="UniProtKB-ARBA"/>
</dbReference>
<dbReference type="GO" id="GO:1990904">
    <property type="term" value="C:ribonucleoprotein complex"/>
    <property type="evidence" value="ECO:0007669"/>
    <property type="project" value="UniProtKB-KW"/>
</dbReference>
<dbReference type="GO" id="GO:0005840">
    <property type="term" value="C:ribosome"/>
    <property type="evidence" value="ECO:0007669"/>
    <property type="project" value="UniProtKB-KW"/>
</dbReference>
<dbReference type="GO" id="GO:0070181">
    <property type="term" value="F:small ribosomal subunit rRNA binding"/>
    <property type="evidence" value="ECO:0000318"/>
    <property type="project" value="GO_Central"/>
</dbReference>
<dbReference type="GO" id="GO:0003735">
    <property type="term" value="F:structural constituent of ribosome"/>
    <property type="evidence" value="ECO:0000318"/>
    <property type="project" value="GO_Central"/>
</dbReference>
<dbReference type="GO" id="GO:0006412">
    <property type="term" value="P:translation"/>
    <property type="evidence" value="ECO:0007669"/>
    <property type="project" value="UniProtKB-UniRule"/>
</dbReference>
<dbReference type="CDD" id="cd00473">
    <property type="entry name" value="bS6"/>
    <property type="match status" value="1"/>
</dbReference>
<dbReference type="FunFam" id="3.30.70.60:FF:000002">
    <property type="entry name" value="30S ribosomal protein S6"/>
    <property type="match status" value="1"/>
</dbReference>
<dbReference type="Gene3D" id="3.30.70.60">
    <property type="match status" value="1"/>
</dbReference>
<dbReference type="HAMAP" id="MF_00360">
    <property type="entry name" value="Ribosomal_bS6"/>
    <property type="match status" value="1"/>
</dbReference>
<dbReference type="InterPro" id="IPR000529">
    <property type="entry name" value="Ribosomal_bS6"/>
</dbReference>
<dbReference type="InterPro" id="IPR035980">
    <property type="entry name" value="Ribosomal_bS6_sf"/>
</dbReference>
<dbReference type="InterPro" id="IPR020814">
    <property type="entry name" value="Ribosomal_S6_plastid/chlpt"/>
</dbReference>
<dbReference type="InterPro" id="IPR014717">
    <property type="entry name" value="Transl_elong_EF1B/ribsomal_bS6"/>
</dbReference>
<dbReference type="NCBIfam" id="TIGR00166">
    <property type="entry name" value="S6"/>
    <property type="match status" value="1"/>
</dbReference>
<dbReference type="PANTHER" id="PTHR21011">
    <property type="entry name" value="MITOCHONDRIAL 28S RIBOSOMAL PROTEIN S6"/>
    <property type="match status" value="1"/>
</dbReference>
<dbReference type="PANTHER" id="PTHR21011:SF1">
    <property type="entry name" value="SMALL RIBOSOMAL SUBUNIT PROTEIN BS6M"/>
    <property type="match status" value="1"/>
</dbReference>
<dbReference type="Pfam" id="PF01250">
    <property type="entry name" value="Ribosomal_S6"/>
    <property type="match status" value="1"/>
</dbReference>
<dbReference type="SUPFAM" id="SSF54995">
    <property type="entry name" value="Ribosomal protein S6"/>
    <property type="match status" value="1"/>
</dbReference>
<sequence>MAKYEILYIIRPNIEEEAKNALVARFDSILTDNGATVVESKTWEKRRLAYEIQDFREGLYHIVNVEANDDAALKEFDRLSKINADILRHMIVKIDA</sequence>
<feature type="chain" id="PRO_0000176855" description="Small ribosomal subunit protein bS6">
    <location>
        <begin position="1"/>
        <end position="96"/>
    </location>
</feature>
<gene>
    <name evidence="1" type="primary">rpsF</name>
    <name type="ordered locus">spr1396</name>
</gene>
<proteinExistence type="inferred from homology"/>
<comment type="function">
    <text evidence="1">Binds together with bS18 to 16S ribosomal RNA.</text>
</comment>
<comment type="similarity">
    <text evidence="1">Belongs to the bacterial ribosomal protein bS6 family.</text>
</comment>
<evidence type="ECO:0000255" key="1">
    <source>
        <dbReference type="HAMAP-Rule" id="MF_00360"/>
    </source>
</evidence>
<evidence type="ECO:0000305" key="2"/>
<organism>
    <name type="scientific">Streptococcus pneumoniae (strain ATCC BAA-255 / R6)</name>
    <dbReference type="NCBI Taxonomy" id="171101"/>
    <lineage>
        <taxon>Bacteria</taxon>
        <taxon>Bacillati</taxon>
        <taxon>Bacillota</taxon>
        <taxon>Bacilli</taxon>
        <taxon>Lactobacillales</taxon>
        <taxon>Streptococcaceae</taxon>
        <taxon>Streptococcus</taxon>
    </lineage>
</organism>
<keyword id="KW-1185">Reference proteome</keyword>
<keyword id="KW-0687">Ribonucleoprotein</keyword>
<keyword id="KW-0689">Ribosomal protein</keyword>
<keyword id="KW-0694">RNA-binding</keyword>
<keyword id="KW-0699">rRNA-binding</keyword>
<protein>
    <recommendedName>
        <fullName evidence="1">Small ribosomal subunit protein bS6</fullName>
    </recommendedName>
    <alternativeName>
        <fullName evidence="2">30S ribosomal protein S6</fullName>
    </alternativeName>
</protein>